<organism>
    <name type="scientific">Haemophilus influenzae (strain PittEE)</name>
    <dbReference type="NCBI Taxonomy" id="374930"/>
    <lineage>
        <taxon>Bacteria</taxon>
        <taxon>Pseudomonadati</taxon>
        <taxon>Pseudomonadota</taxon>
        <taxon>Gammaproteobacteria</taxon>
        <taxon>Pasteurellales</taxon>
        <taxon>Pasteurellaceae</taxon>
        <taxon>Haemophilus</taxon>
    </lineage>
</organism>
<protein>
    <recommendedName>
        <fullName evidence="1">Large ribosomal subunit protein bL28</fullName>
    </recommendedName>
    <alternativeName>
        <fullName evidence="2">50S ribosomal protein L28</fullName>
    </alternativeName>
</protein>
<dbReference type="EMBL" id="CP000671">
    <property type="protein sequence ID" value="ABQ98768.1"/>
    <property type="molecule type" value="Genomic_DNA"/>
</dbReference>
<dbReference type="SMR" id="A5UDB7"/>
<dbReference type="KEGG" id="hip:CGSHiEE_07205"/>
<dbReference type="HOGENOM" id="CLU_064548_3_1_6"/>
<dbReference type="GO" id="GO:0022625">
    <property type="term" value="C:cytosolic large ribosomal subunit"/>
    <property type="evidence" value="ECO:0007669"/>
    <property type="project" value="TreeGrafter"/>
</dbReference>
<dbReference type="GO" id="GO:0003735">
    <property type="term" value="F:structural constituent of ribosome"/>
    <property type="evidence" value="ECO:0007669"/>
    <property type="project" value="InterPro"/>
</dbReference>
<dbReference type="GO" id="GO:0006412">
    <property type="term" value="P:translation"/>
    <property type="evidence" value="ECO:0007669"/>
    <property type="project" value="UniProtKB-UniRule"/>
</dbReference>
<dbReference type="FunFam" id="2.30.170.40:FF:000001">
    <property type="entry name" value="50S ribosomal protein L28"/>
    <property type="match status" value="1"/>
</dbReference>
<dbReference type="Gene3D" id="2.30.170.40">
    <property type="entry name" value="Ribosomal protein L28/L24"/>
    <property type="match status" value="1"/>
</dbReference>
<dbReference type="HAMAP" id="MF_00373">
    <property type="entry name" value="Ribosomal_bL28"/>
    <property type="match status" value="1"/>
</dbReference>
<dbReference type="InterPro" id="IPR026569">
    <property type="entry name" value="Ribosomal_bL28"/>
</dbReference>
<dbReference type="InterPro" id="IPR034704">
    <property type="entry name" value="Ribosomal_bL28/bL31-like_sf"/>
</dbReference>
<dbReference type="InterPro" id="IPR001383">
    <property type="entry name" value="Ribosomal_bL28_bact-type"/>
</dbReference>
<dbReference type="InterPro" id="IPR037147">
    <property type="entry name" value="Ribosomal_bL28_sf"/>
</dbReference>
<dbReference type="NCBIfam" id="TIGR00009">
    <property type="entry name" value="L28"/>
    <property type="match status" value="1"/>
</dbReference>
<dbReference type="PANTHER" id="PTHR13528">
    <property type="entry name" value="39S RIBOSOMAL PROTEIN L28, MITOCHONDRIAL"/>
    <property type="match status" value="1"/>
</dbReference>
<dbReference type="PANTHER" id="PTHR13528:SF2">
    <property type="entry name" value="LARGE RIBOSOMAL SUBUNIT PROTEIN BL28M"/>
    <property type="match status" value="1"/>
</dbReference>
<dbReference type="Pfam" id="PF00830">
    <property type="entry name" value="Ribosomal_L28"/>
    <property type="match status" value="1"/>
</dbReference>
<dbReference type="SUPFAM" id="SSF143800">
    <property type="entry name" value="L28p-like"/>
    <property type="match status" value="1"/>
</dbReference>
<comment type="similarity">
    <text evidence="1">Belongs to the bacterial ribosomal protein bL28 family.</text>
</comment>
<name>RL28_HAEIE</name>
<keyword id="KW-0687">Ribonucleoprotein</keyword>
<keyword id="KW-0689">Ribosomal protein</keyword>
<proteinExistence type="inferred from homology"/>
<feature type="chain" id="PRO_1000007247" description="Large ribosomal subunit protein bL28">
    <location>
        <begin position="1"/>
        <end position="78"/>
    </location>
</feature>
<sequence>MSRVCQVTGKRPAVGNNRSHAMNATRRRFLPNLHTHRFWVESENRFVTLRLTAKGMRIIDKKGIDAVLAEIRARGEKI</sequence>
<gene>
    <name evidence="1" type="primary">rpmB</name>
    <name type="ordered locus">CGSHiEE_07205</name>
</gene>
<evidence type="ECO:0000255" key="1">
    <source>
        <dbReference type="HAMAP-Rule" id="MF_00373"/>
    </source>
</evidence>
<evidence type="ECO:0000305" key="2"/>
<reference key="1">
    <citation type="journal article" date="2007" name="Genome Biol.">
        <title>Characterization and modeling of the Haemophilus influenzae core and supragenomes based on the complete genomic sequences of Rd and 12 clinical nontypeable strains.</title>
        <authorList>
            <person name="Hogg J.S."/>
            <person name="Hu F.Z."/>
            <person name="Janto B."/>
            <person name="Boissy R."/>
            <person name="Hayes J."/>
            <person name="Keefe R."/>
            <person name="Post J.C."/>
            <person name="Ehrlich G.D."/>
        </authorList>
    </citation>
    <scope>NUCLEOTIDE SEQUENCE [LARGE SCALE GENOMIC DNA]</scope>
    <source>
        <strain>PittEE</strain>
    </source>
</reference>
<accession>A5UDB7</accession>